<dbReference type="EMBL" id="EU246693">
    <property type="protein sequence ID" value="ABY74981.1"/>
    <property type="molecule type" value="mRNA"/>
</dbReference>
<dbReference type="SMR" id="P82966"/>
<dbReference type="MEROPS" id="I02.055"/>
<dbReference type="GO" id="GO:0005615">
    <property type="term" value="C:extracellular space"/>
    <property type="evidence" value="ECO:0007669"/>
    <property type="project" value="TreeGrafter"/>
</dbReference>
<dbReference type="GO" id="GO:0004867">
    <property type="term" value="F:serine-type endopeptidase inhibitor activity"/>
    <property type="evidence" value="ECO:0000314"/>
    <property type="project" value="UniProtKB"/>
</dbReference>
<dbReference type="CDD" id="cd22594">
    <property type="entry name" value="Kunitz_textilinin-like"/>
    <property type="match status" value="1"/>
</dbReference>
<dbReference type="FunFam" id="4.10.410.10:FF:000019">
    <property type="entry name" value="collagen alpha-1(VII) chain"/>
    <property type="match status" value="1"/>
</dbReference>
<dbReference type="Gene3D" id="4.10.410.10">
    <property type="entry name" value="Pancreatic trypsin inhibitor Kunitz domain"/>
    <property type="match status" value="1"/>
</dbReference>
<dbReference type="InterPro" id="IPR002223">
    <property type="entry name" value="Kunitz_BPTI"/>
</dbReference>
<dbReference type="InterPro" id="IPR036880">
    <property type="entry name" value="Kunitz_BPTI_sf"/>
</dbReference>
<dbReference type="InterPro" id="IPR020901">
    <property type="entry name" value="Prtase_inh_Kunz-CS"/>
</dbReference>
<dbReference type="InterPro" id="IPR050098">
    <property type="entry name" value="TFPI/VKTCI-like"/>
</dbReference>
<dbReference type="PANTHER" id="PTHR10083:SF374">
    <property type="entry name" value="BPTI_KUNITZ INHIBITOR DOMAIN-CONTAINING PROTEIN"/>
    <property type="match status" value="1"/>
</dbReference>
<dbReference type="PANTHER" id="PTHR10083">
    <property type="entry name" value="KUNITZ-TYPE PROTEASE INHIBITOR-RELATED"/>
    <property type="match status" value="1"/>
</dbReference>
<dbReference type="Pfam" id="PF00014">
    <property type="entry name" value="Kunitz_BPTI"/>
    <property type="match status" value="1"/>
</dbReference>
<dbReference type="PRINTS" id="PR00759">
    <property type="entry name" value="BASICPTASE"/>
</dbReference>
<dbReference type="SMART" id="SM00131">
    <property type="entry name" value="KU"/>
    <property type="match status" value="1"/>
</dbReference>
<dbReference type="SUPFAM" id="SSF57362">
    <property type="entry name" value="BPTI-like"/>
    <property type="match status" value="1"/>
</dbReference>
<dbReference type="PROSITE" id="PS00280">
    <property type="entry name" value="BPTI_KUNITZ_1"/>
    <property type="match status" value="1"/>
</dbReference>
<dbReference type="PROSITE" id="PS50279">
    <property type="entry name" value="BPTI_KUNITZ_2"/>
    <property type="match status" value="1"/>
</dbReference>
<name>VKTCI_OPHHA</name>
<evidence type="ECO:0000250" key="1"/>
<evidence type="ECO:0000255" key="2">
    <source>
        <dbReference type="PROSITE-ProRule" id="PRU00031"/>
    </source>
</evidence>
<evidence type="ECO:0000269" key="3">
    <source>
    </source>
</evidence>
<evidence type="ECO:0000305" key="4"/>
<evidence type="ECO:0000305" key="5">
    <source>
    </source>
</evidence>
<comment type="function">
    <text evidence="3">Serine protease inhibitor that inhibits chymotrypsin (Ki=3520 nM).</text>
</comment>
<comment type="subcellular location">
    <subcellularLocation>
        <location evidence="3">Secreted</location>
    </subcellularLocation>
</comment>
<comment type="tissue specificity">
    <text evidence="5">Expressed by the venom gland.</text>
</comment>
<comment type="mass spectrometry" mass="6493.0" method="Electrospray" evidence="3"/>
<comment type="similarity">
    <text evidence="4">Belongs to the venom Kunitz-type family.</text>
</comment>
<proteinExistence type="evidence at protein level"/>
<keyword id="KW-0903">Direct protein sequencing</keyword>
<keyword id="KW-1015">Disulfide bond</keyword>
<keyword id="KW-0646">Protease inhibitor</keyword>
<keyword id="KW-0964">Secreted</keyword>
<keyword id="KW-0722">Serine protease inhibitor</keyword>
<keyword id="KW-0732">Signal</keyword>
<reference key="1">
    <citation type="submission" date="2007-10" db="EMBL/GenBank/DDBJ databases">
        <title>Cloning and expression of chymotrypsin inhibitor Oh11-1 from king cobra.</title>
        <authorList>
            <person name="He Y.-Y."/>
            <person name="Liu S.-B."/>
            <person name="Qian J.-Q."/>
            <person name="Lee W.-H."/>
            <person name="Zhang Y."/>
        </authorList>
    </citation>
    <scope>NUCLEOTIDE SEQUENCE [MRNA]</scope>
    <source>
        <tissue>Venom gland</tissue>
    </source>
</reference>
<reference key="2">
    <citation type="journal article" date="2001" name="Biochem. Biophys. Res. Commun.">
        <title>Purification and characterization of a chymotrypsin inhibitor from the venom of Ophiophagus hannah (King Cobra).</title>
        <authorList>
            <person name="Chang L.-S."/>
            <person name="Chung C."/>
            <person name="Huang H.-B."/>
            <person name="Lin S.-R."/>
        </authorList>
    </citation>
    <scope>PROTEIN SEQUENCE OF 26-83</scope>
    <scope>FUNCTION</scope>
    <scope>MASS SPECTROMETRY</scope>
    <scope>SUBCELLULAR LOCATION</scope>
    <source>
        <tissue>Venom</tissue>
    </source>
</reference>
<feature type="signal peptide" evidence="3">
    <location>
        <begin position="1"/>
        <end position="25"/>
    </location>
</feature>
<feature type="chain" id="PRO_0000155442" description="Kunitz-type serine protease inhibitor">
    <location>
        <begin position="26"/>
        <end position="83"/>
    </location>
</feature>
<feature type="domain" description="BPTI/Kunitz inhibitor" evidence="2">
    <location>
        <begin position="31"/>
        <end position="81"/>
    </location>
</feature>
<feature type="site" description="Reactive bond for chymotrypsin" evidence="1">
    <location>
        <begin position="41"/>
        <end position="42"/>
    </location>
</feature>
<feature type="disulfide bond" evidence="2">
    <location>
        <begin position="31"/>
        <end position="81"/>
    </location>
</feature>
<feature type="disulfide bond" evidence="2">
    <location>
        <begin position="40"/>
        <end position="64"/>
    </location>
</feature>
<feature type="disulfide bond" evidence="2">
    <location>
        <begin position="56"/>
        <end position="77"/>
    </location>
</feature>
<accession>P82966</accession>
<accession>B6RLX3</accession>
<sequence length="83" mass="9136">MSSGRLLLLLGLLTLWAELTPVSGLGRPKFCELPPEPGLCNARKTFFYYSLHSHACQKFIYGGCGGNANKFKTIDECHRTCVG</sequence>
<organism>
    <name type="scientific">Ophiophagus hannah</name>
    <name type="common">King cobra</name>
    <name type="synonym">Naja hannah</name>
    <dbReference type="NCBI Taxonomy" id="8665"/>
    <lineage>
        <taxon>Eukaryota</taxon>
        <taxon>Metazoa</taxon>
        <taxon>Chordata</taxon>
        <taxon>Craniata</taxon>
        <taxon>Vertebrata</taxon>
        <taxon>Euteleostomi</taxon>
        <taxon>Lepidosauria</taxon>
        <taxon>Squamata</taxon>
        <taxon>Bifurcata</taxon>
        <taxon>Unidentata</taxon>
        <taxon>Episquamata</taxon>
        <taxon>Toxicofera</taxon>
        <taxon>Serpentes</taxon>
        <taxon>Colubroidea</taxon>
        <taxon>Elapidae</taxon>
        <taxon>Elapinae</taxon>
        <taxon>Ophiophagus</taxon>
    </lineage>
</organism>
<protein>
    <recommendedName>
        <fullName>Kunitz-type serine protease inhibitor</fullName>
    </recommendedName>
    <alternativeName>
        <fullName>Oh11-1</fullName>
    </alternativeName>
    <alternativeName>
        <fullName>Venom chymotrypsin inhibitor</fullName>
    </alternativeName>
</protein>